<evidence type="ECO:0000250" key="1"/>
<evidence type="ECO:0000250" key="2">
    <source>
        <dbReference type="UniProtKB" id="P01106"/>
    </source>
</evidence>
<evidence type="ECO:0000250" key="3">
    <source>
        <dbReference type="UniProtKB" id="P01108"/>
    </source>
</evidence>
<evidence type="ECO:0000255" key="4">
    <source>
        <dbReference type="PROSITE-ProRule" id="PRU00981"/>
    </source>
</evidence>
<evidence type="ECO:0000256" key="5">
    <source>
        <dbReference type="SAM" id="MobiDB-lite"/>
    </source>
</evidence>
<evidence type="ECO:0000303" key="6">
    <source>
    </source>
</evidence>
<evidence type="ECO:0000305" key="7">
    <source>
    </source>
</evidence>
<keyword id="KW-0007">Acetylation</keyword>
<keyword id="KW-0010">Activator</keyword>
<keyword id="KW-0024">Alternative initiation</keyword>
<keyword id="KW-0158">Chromosome</keyword>
<keyword id="KW-0963">Cytoplasm</keyword>
<keyword id="KW-0238">DNA-binding</keyword>
<keyword id="KW-0325">Glycoprotein</keyword>
<keyword id="KW-1017">Isopeptide bond</keyword>
<keyword id="KW-0539">Nucleus</keyword>
<keyword id="KW-0597">Phosphoprotein</keyword>
<keyword id="KW-0656">Proto-oncogene</keyword>
<keyword id="KW-1185">Reference proteome</keyword>
<keyword id="KW-0804">Transcription</keyword>
<keyword id="KW-0805">Transcription regulation</keyword>
<keyword id="KW-0832">Ubl conjugation</keyword>
<proteinExistence type="evidence at transcript level"/>
<feature type="chain" id="PRO_0000127290" description="Myc proto-oncogene protein">
    <location>
        <begin position="1"/>
        <end position="452"/>
    </location>
</feature>
<feature type="domain" description="bHLH" evidence="4">
    <location>
        <begin position="367"/>
        <end position="419"/>
    </location>
</feature>
<feature type="region of interest" description="Disordered" evidence="5">
    <location>
        <begin position="214"/>
        <end position="378"/>
    </location>
</feature>
<feature type="region of interest" description="Leucine-zipper">
    <location>
        <begin position="426"/>
        <end position="447"/>
    </location>
</feature>
<feature type="short sequence motif" description="9aaTAD" evidence="2">
    <location>
        <begin position="113"/>
        <end position="121"/>
    </location>
</feature>
<feature type="short sequence motif" description="UBR5-degron" evidence="2">
    <location>
        <begin position="368"/>
        <end position="377"/>
    </location>
</feature>
<feature type="compositionally biased region" description="Low complexity" evidence="5">
    <location>
        <begin position="220"/>
        <end position="251"/>
    </location>
</feature>
<feature type="compositionally biased region" description="Acidic residues" evidence="5">
    <location>
        <begin position="264"/>
        <end position="276"/>
    </location>
</feature>
<feature type="compositionally biased region" description="Basic and acidic residues" evidence="5">
    <location>
        <begin position="279"/>
        <end position="291"/>
    </location>
</feature>
<feature type="compositionally biased region" description="Basic and acidic residues" evidence="5">
    <location>
        <begin position="328"/>
        <end position="344"/>
    </location>
</feature>
<feature type="compositionally biased region" description="Polar residues" evidence="5">
    <location>
        <begin position="348"/>
        <end position="360"/>
    </location>
</feature>
<feature type="modified residue" description="Phosphoserine" evidence="2">
    <location>
        <position position="19"/>
    </location>
</feature>
<feature type="modified residue" description="Phosphothreonine; by GSK3; alternate" evidence="2">
    <location>
        <position position="71"/>
    </location>
</feature>
<feature type="modified residue" description="Phosphoserine; by DYRK2, GSK3 and CDK2" evidence="2">
    <location>
        <position position="75"/>
    </location>
</feature>
<feature type="modified residue" description="Phosphoserine" evidence="2">
    <location>
        <position position="84"/>
    </location>
</feature>
<feature type="modified residue" description="Phosphoserine" evidence="2">
    <location>
        <position position="94"/>
    </location>
</feature>
<feature type="modified residue" description="N6-acetyllysine; by PCAF; alternate" evidence="2">
    <location>
        <position position="156"/>
    </location>
</feature>
<feature type="modified residue" description="N6-acetyllysine; alternate" evidence="2">
    <location>
        <position position="161"/>
    </location>
</feature>
<feature type="modified residue" description="Phosphoserine" evidence="2">
    <location>
        <position position="164"/>
    </location>
</feature>
<feature type="modified residue" description="N6-acetyllysine; by PCAF" evidence="2">
    <location>
        <position position="170"/>
    </location>
</feature>
<feature type="modified residue" description="Phosphoserine" evidence="2">
    <location>
        <position position="172"/>
    </location>
</feature>
<feature type="modified residue" description="Phosphoserine" evidence="2">
    <location>
        <position position="174"/>
    </location>
</feature>
<feature type="modified residue" description="N6-acetyllysine; by PCAF" evidence="2">
    <location>
        <position position="288"/>
    </location>
</feature>
<feature type="modified residue" description="Phosphoserine" evidence="2">
    <location>
        <position position="306"/>
    </location>
</feature>
<feature type="modified residue" description="Phosphoserine" evidence="2">
    <location>
        <position position="327"/>
    </location>
</feature>
<feature type="modified residue" description="Phosphothreonine" evidence="2">
    <location>
        <position position="328"/>
    </location>
</feature>
<feature type="modified residue" description="N6-acetyllysine; by PCAF" evidence="2">
    <location>
        <position position="330"/>
    </location>
</feature>
<feature type="modified residue" description="N6-acetyllysine; by PCAF" evidence="2">
    <location>
        <position position="336"/>
    </location>
</feature>
<feature type="modified residue" description="Phosphoserine; by PIM2; in vitro" evidence="3">
    <location>
        <position position="342"/>
    </location>
</feature>
<feature type="modified residue" description="Phosphoserine" evidence="2">
    <location>
        <position position="357"/>
    </location>
</feature>
<feature type="modified residue" description="Phosphoserine" evidence="2">
    <location>
        <position position="360"/>
    </location>
</feature>
<feature type="modified residue" description="Phosphoserine" evidence="2">
    <location>
        <position position="361"/>
    </location>
</feature>
<feature type="modified residue" description="N6-acetyllysine; by PCAF" evidence="2">
    <location>
        <position position="384"/>
    </location>
</feature>
<feature type="glycosylation site" description="O-linked (GlcNAc) threonine; alternate" evidence="1">
    <location>
        <position position="71"/>
    </location>
</feature>
<feature type="cross-link" description="Glycyl lysine isopeptide (Lys-Gly) (interchain with G-Cter in SUMO2)" evidence="2">
    <location>
        <position position="65"/>
    </location>
</feature>
<feature type="cross-link" description="Glycyl lysine isopeptide (Lys-Gly) (interchain with G-Cter in SUMO2); alternate" evidence="2">
    <location>
        <position position="156"/>
    </location>
</feature>
<feature type="cross-link" description="Glycyl lysine isopeptide (Lys-Gly) (interchain with G-Cter in SUMO2); alternate" evidence="2">
    <location>
        <position position="161"/>
    </location>
</feature>
<feature type="cross-link" description="Glycyl lysine isopeptide (Lys-Gly) (interchain with G-Cter in SUMO2)" evidence="2">
    <location>
        <position position="311"/>
    </location>
</feature>
<feature type="splice variant" id="VSP_061777" description="In isoform 1.">
    <location>
        <begin position="1"/>
        <end position="13"/>
    </location>
</feature>
<reference key="1">
    <citation type="journal article" date="1996" name="J. Cell. Physiol.">
        <title>c-Myc expression is controlled by the mitogenic cAMP-cascade in thyrocytes.</title>
        <authorList>
            <person name="Pirson I."/>
            <person name="Coulonval K."/>
            <person name="Lamy F."/>
            <person name="Dumont J.E."/>
        </authorList>
    </citation>
    <scope>NUCLEOTIDE SEQUENCE [MRNA] (ISOFORM 1)</scope>
    <source>
        <tissue>Thyroid</tissue>
    </source>
</reference>
<reference key="2">
    <citation type="journal article" date="1988" name="Cell">
        <title>A non-AUG translational initiation in c-myc exon 1 generates an N-terminally distinct protein whose synthesis is disrupted in Burkitt's lymphomas.</title>
        <authorList>
            <person name="Hann S.R."/>
            <person name="King M.W."/>
            <person name="Bentley D.L."/>
            <person name="Anderson C.W."/>
            <person name="Eisenman R.N."/>
        </authorList>
    </citation>
    <scope>ALTERNATIVE TRANSLATION INITIATION</scope>
</reference>
<name>MYC_CANLF</name>
<organism>
    <name type="scientific">Canis lupus familiaris</name>
    <name type="common">Dog</name>
    <name type="synonym">Canis familiaris</name>
    <dbReference type="NCBI Taxonomy" id="9615"/>
    <lineage>
        <taxon>Eukaryota</taxon>
        <taxon>Metazoa</taxon>
        <taxon>Chordata</taxon>
        <taxon>Craniata</taxon>
        <taxon>Vertebrata</taxon>
        <taxon>Euteleostomi</taxon>
        <taxon>Mammalia</taxon>
        <taxon>Eutheria</taxon>
        <taxon>Laurasiatheria</taxon>
        <taxon>Carnivora</taxon>
        <taxon>Caniformia</taxon>
        <taxon>Canidae</taxon>
        <taxon>Canis</taxon>
    </lineage>
</organism>
<comment type="function">
    <text evidence="2 3">Transcription factor that binds DNA in a non-specific manner, yet also specifically recognizes the core sequence 5'-CAC[GA]TG-3'. Activates the transcription of growth-related genes. Binds to the VEGFA promoter, promoting VEGFA production and subsequent sprouting angiogenesis. Regulator of somatic reprogramming, controls self-renewal of embryonic stem cells. Functions with TAF6L to activate target gene expression through RNA polymerase II pause release (By similarity). Positively regulates transcription of HNRNPA1, HNRNPA2 and PTBP1 which in turn regulate splicing of pyruvate kinase PKM by binding repressively to sequences flanking PKM exon 9, inhibiting exon 9 inclusion and resulting in exon 10 inclusion and production of the PKM M2 isoform (By similarity).</text>
</comment>
<comment type="subunit">
    <text evidence="2 3">Efficient DNA binding requires dimerization with another bHLH protein. Binds DNA as a heterodimer with MAX (By similarity). Interacts with TAF1C and SPAG9. Interacts with PARP10. Interacts with KDM5A and KDM5B. Interacts (when phosphorylated at Thr-71 and Ser-75) with FBXW7. Interacts with PIM2. Interacts with RIOX1. The heterodimer MYC:MAX interacts with ABI1; the interaction may enhance MYC:MAX transcriptional activity. Interacts with TRIM6 (By similarity). Interacts with NPM1; the binary complex is recruited to the promoter of MYC target genes and enhances their transcription (By similarity). Interacts with CIP2A; leading to the stabilization of MYC (By similarity). Interacts with NUP205 (By similarity). Interacts with HEATR1; the interaction is required for localization of MYC to the nucleolus (By similarity).</text>
</comment>
<comment type="subcellular location">
    <subcellularLocation>
        <location evidence="2">Nucleus</location>
        <location evidence="2">Nucleoplasm</location>
    </subcellularLocation>
    <subcellularLocation>
        <location evidence="2">Nucleus</location>
        <location evidence="2">Nucleolus</location>
    </subcellularLocation>
    <subcellularLocation>
        <location evidence="2">Nucleus</location>
    </subcellularLocation>
    <subcellularLocation>
        <location evidence="2">Cytoplasm</location>
    </subcellularLocation>
    <subcellularLocation>
        <location evidence="2">Chromosome</location>
    </subcellularLocation>
    <text evidence="2">Association with chromatin is reduced by hyperphosphorylation. Localization to the nucleolus is dependent on HEATR1.</text>
</comment>
<comment type="alternative products">
    <event type="alternative initiation"/>
    <isoform>
        <id>Q28350-1</id>
        <name>2</name>
        <name evidence="6">c-myc 1</name>
        <sequence type="displayed"/>
    </isoform>
    <isoform>
        <id>Q28350-2</id>
        <name>1</name>
        <name evidence="6">c-myc 2</name>
        <sequence type="described" ref="VSP_061777"/>
    </isoform>
</comment>
<comment type="domain">
    <text evidence="2">The 9aaTAD motif is a transactivation domain present in a large number of yeast and animal transcription factors.</text>
</comment>
<comment type="PTM">
    <text evidence="2 3">Phosphorylated by PRKDC (By similarity). Phosphorylation at Ser-342 by PIM2 leads to the stabilization of MYC (By similarity). Phosphorylation at Ser-75 by CDK2 prevents Ras-induced senescence. Phosphorylated at Ser-75 by DYRK2; this primes the protein for subsequent phosphorylation by GSK3B at Thr-71. Phosphorylation at Thr-71 and Ser-75 by GSK3 is required for ubiquitination and degradation by the proteasome. Dephosphorylation at multiple sites by the PNUTS-PP1 complex promotes MYC stability by preventing ubiquitination by the SCF(FBXW7) complex. Dephosphorylation at Ser-75 by protein phosphatase 2A (PPP2CA) promotes its degradation; interaction with PPP2CA is enhanced by AMBRA1 (By similarity).</text>
</comment>
<comment type="PTM">
    <text evidence="2 3">Ubiquitinated by the SCF(FBXW7) complex when phosphorylated at Thr-71 and Ser-75, leading to its degradation by the proteasome. Ubiquitination is counteracted by USP28 in the nucleoplasm and USP36 in the nucleolus, both interacting with of FBXW7, leading to its deubiquitination and preventing degradation. Also polyubiquitinated by the DCX(TRPC4AP) complex. Ubiquitinated by UBR5 when not forming a heterodimer with another bHLH protein, leading to its degradation: UBR5 recognizes and binds a degron that is only available upon heterodimer dissociation (By similarity). Ubiquitinated by TRIM6 in a phosphorylation-independent manner.</text>
</comment>
<comment type="miscellaneous">
    <text evidence="7">Alternative translation initiation from an upstream, in-frame non-ATG (CTG) codon or a downstream ATG start site results in the production of 2 isoforms with distinct N-termini, shown in this entry as isoform 2 and isoform 1, respectively.</text>
</comment>
<comment type="miscellaneous">
    <molecule>Isoform 2</molecule>
    <text evidence="7">Produced by alternative translation initiation from a CTG codon, which is translated as Met.</text>
</comment>
<accession>Q28350</accession>
<gene>
    <name type="primary">MYC</name>
</gene>
<protein>
    <recommendedName>
        <fullName>Myc proto-oncogene protein</fullName>
    </recommendedName>
    <alternativeName>
        <fullName>Proto-oncogene c-Myc</fullName>
    </alternativeName>
    <alternativeName>
        <fullName>Transcription factor p64</fullName>
    </alternativeName>
</protein>
<dbReference type="EMBL" id="X95367">
    <property type="protein sequence ID" value="CAA64654.1"/>
    <property type="molecule type" value="mRNA"/>
</dbReference>
<dbReference type="RefSeq" id="NP_001003246.2">
    <molecule id="Q28350-1"/>
    <property type="nucleotide sequence ID" value="NM_001003246.2"/>
</dbReference>
<dbReference type="SMR" id="Q28350"/>
<dbReference type="FunCoup" id="Q28350">
    <property type="interactions" value="693"/>
</dbReference>
<dbReference type="STRING" id="9615.ENSCAFP00000001523"/>
<dbReference type="GlyCosmos" id="Q28350">
    <property type="glycosylation" value="1 site, No reported glycans"/>
</dbReference>
<dbReference type="PaxDb" id="9612-ENSCAFP00000001523"/>
<dbReference type="GeneID" id="403924"/>
<dbReference type="KEGG" id="cfa:403924"/>
<dbReference type="CTD" id="4609"/>
<dbReference type="eggNOG" id="KOG2483">
    <property type="taxonomic scope" value="Eukaryota"/>
</dbReference>
<dbReference type="InParanoid" id="Q28350"/>
<dbReference type="OMA" id="FPYPLHD"/>
<dbReference type="OrthoDB" id="5964374at2759"/>
<dbReference type="Proteomes" id="UP000002254">
    <property type="component" value="Unplaced"/>
</dbReference>
<dbReference type="Proteomes" id="UP000694429">
    <property type="component" value="Unplaced"/>
</dbReference>
<dbReference type="Proteomes" id="UP000694542">
    <property type="component" value="Unplaced"/>
</dbReference>
<dbReference type="Proteomes" id="UP000805418">
    <property type="component" value="Unplaced"/>
</dbReference>
<dbReference type="GO" id="GO:0000785">
    <property type="term" value="C:chromatin"/>
    <property type="evidence" value="ECO:0007669"/>
    <property type="project" value="Ensembl"/>
</dbReference>
<dbReference type="GO" id="GO:0005737">
    <property type="term" value="C:cytoplasm"/>
    <property type="evidence" value="ECO:0007669"/>
    <property type="project" value="UniProtKB-SubCell"/>
</dbReference>
<dbReference type="GO" id="GO:0071943">
    <property type="term" value="C:Myc-Max complex"/>
    <property type="evidence" value="ECO:0007669"/>
    <property type="project" value="Ensembl"/>
</dbReference>
<dbReference type="GO" id="GO:0005730">
    <property type="term" value="C:nucleolus"/>
    <property type="evidence" value="ECO:0000250"/>
    <property type="project" value="UniProtKB"/>
</dbReference>
<dbReference type="GO" id="GO:0005654">
    <property type="term" value="C:nucleoplasm"/>
    <property type="evidence" value="ECO:0000250"/>
    <property type="project" value="UniProtKB"/>
</dbReference>
<dbReference type="GO" id="GO:0005634">
    <property type="term" value="C:nucleus"/>
    <property type="evidence" value="ECO:0000314"/>
    <property type="project" value="UniProtKB"/>
</dbReference>
<dbReference type="GO" id="GO:0090571">
    <property type="term" value="C:RNA polymerase II transcription repressor complex"/>
    <property type="evidence" value="ECO:0007669"/>
    <property type="project" value="Ensembl"/>
</dbReference>
<dbReference type="GO" id="GO:0001046">
    <property type="term" value="F:core promoter sequence-specific DNA binding"/>
    <property type="evidence" value="ECO:0007669"/>
    <property type="project" value="Ensembl"/>
</dbReference>
<dbReference type="GO" id="GO:0003677">
    <property type="term" value="F:DNA binding"/>
    <property type="evidence" value="ECO:0000314"/>
    <property type="project" value="UniProtKB"/>
</dbReference>
<dbReference type="GO" id="GO:0001228">
    <property type="term" value="F:DNA-binding transcription activator activity, RNA polymerase II-specific"/>
    <property type="evidence" value="ECO:0007669"/>
    <property type="project" value="Ensembl"/>
</dbReference>
<dbReference type="GO" id="GO:0000981">
    <property type="term" value="F:DNA-binding transcription factor activity, RNA polymerase II-specific"/>
    <property type="evidence" value="ECO:0000250"/>
    <property type="project" value="UniProtKB"/>
</dbReference>
<dbReference type="GO" id="GO:0140297">
    <property type="term" value="F:DNA-binding transcription factor binding"/>
    <property type="evidence" value="ECO:0007669"/>
    <property type="project" value="Ensembl"/>
</dbReference>
<dbReference type="GO" id="GO:0001227">
    <property type="term" value="F:DNA-binding transcription repressor activity, RNA polymerase II-specific"/>
    <property type="evidence" value="ECO:0007669"/>
    <property type="project" value="Ensembl"/>
</dbReference>
<dbReference type="GO" id="GO:0070888">
    <property type="term" value="F:E-box binding"/>
    <property type="evidence" value="ECO:0000314"/>
    <property type="project" value="UniProtKB"/>
</dbReference>
<dbReference type="GO" id="GO:0042802">
    <property type="term" value="F:identical protein binding"/>
    <property type="evidence" value="ECO:0007669"/>
    <property type="project" value="Ensembl"/>
</dbReference>
<dbReference type="GO" id="GO:0046983">
    <property type="term" value="F:protein dimerization activity"/>
    <property type="evidence" value="ECO:0007669"/>
    <property type="project" value="InterPro"/>
</dbReference>
<dbReference type="GO" id="GO:0044877">
    <property type="term" value="F:protein-containing complex binding"/>
    <property type="evidence" value="ECO:0000250"/>
    <property type="project" value="UniProtKB"/>
</dbReference>
<dbReference type="GO" id="GO:0000978">
    <property type="term" value="F:RNA polymerase II cis-regulatory region sequence-specific DNA binding"/>
    <property type="evidence" value="ECO:0000318"/>
    <property type="project" value="GO_Central"/>
</dbReference>
<dbReference type="GO" id="GO:1905761">
    <property type="term" value="F:SCF ubiquitin ligase complex binding"/>
    <property type="evidence" value="ECO:0007669"/>
    <property type="project" value="Ensembl"/>
</dbReference>
<dbReference type="GO" id="GO:0001221">
    <property type="term" value="F:transcription coregulator binding"/>
    <property type="evidence" value="ECO:0007669"/>
    <property type="project" value="Ensembl"/>
</dbReference>
<dbReference type="GO" id="GO:0140537">
    <property type="term" value="F:transcription regulator activator activity"/>
    <property type="evidence" value="ECO:0007669"/>
    <property type="project" value="Ensembl"/>
</dbReference>
<dbReference type="GO" id="GO:0071456">
    <property type="term" value="P:cellular response to hypoxia"/>
    <property type="evidence" value="ECO:0007669"/>
    <property type="project" value="Ensembl"/>
</dbReference>
<dbReference type="GO" id="GO:0034644">
    <property type="term" value="P:cellular response to UV"/>
    <property type="evidence" value="ECO:0007669"/>
    <property type="project" value="Ensembl"/>
</dbReference>
<dbReference type="GO" id="GO:0071466">
    <property type="term" value="P:cellular response to xenobiotic stimulus"/>
    <property type="evidence" value="ECO:0007669"/>
    <property type="project" value="Ensembl"/>
</dbReference>
<dbReference type="GO" id="GO:0006338">
    <property type="term" value="P:chromatin remodeling"/>
    <property type="evidence" value="ECO:0000250"/>
    <property type="project" value="UniProtKB"/>
</dbReference>
<dbReference type="GO" id="GO:0051276">
    <property type="term" value="P:chromosome organization"/>
    <property type="evidence" value="ECO:0000250"/>
    <property type="project" value="UniProtKB"/>
</dbReference>
<dbReference type="GO" id="GO:0006974">
    <property type="term" value="P:DNA damage response"/>
    <property type="evidence" value="ECO:0000250"/>
    <property type="project" value="UniProtKB"/>
</dbReference>
<dbReference type="GO" id="GO:0070371">
    <property type="term" value="P:ERK1 and ERK2 cascade"/>
    <property type="evidence" value="ECO:0007669"/>
    <property type="project" value="Ensembl"/>
</dbReference>
<dbReference type="GO" id="GO:0000082">
    <property type="term" value="P:G1/S transition of mitotic cell cycle"/>
    <property type="evidence" value="ECO:0000250"/>
    <property type="project" value="UniProtKB"/>
</dbReference>
<dbReference type="GO" id="GO:0006879">
    <property type="term" value="P:intracellular iron ion homeostasis"/>
    <property type="evidence" value="ECO:0000250"/>
    <property type="project" value="UniProtKB"/>
</dbReference>
<dbReference type="GO" id="GO:0000165">
    <property type="term" value="P:MAPK cascade"/>
    <property type="evidence" value="ECO:0000250"/>
    <property type="project" value="UniProtKB"/>
</dbReference>
<dbReference type="GO" id="GO:0043066">
    <property type="term" value="P:negative regulation of apoptotic process"/>
    <property type="evidence" value="ECO:0000315"/>
    <property type="project" value="UniProtKB"/>
</dbReference>
<dbReference type="GO" id="GO:0051782">
    <property type="term" value="P:negative regulation of cell division"/>
    <property type="evidence" value="ECO:0000250"/>
    <property type="project" value="UniProtKB"/>
</dbReference>
<dbReference type="GO" id="GO:0048147">
    <property type="term" value="P:negative regulation of fibroblast proliferation"/>
    <property type="evidence" value="ECO:0007669"/>
    <property type="project" value="Ensembl"/>
</dbReference>
<dbReference type="GO" id="GO:0044027">
    <property type="term" value="P:negative regulation of gene expression via chromosomal CpG island methylation"/>
    <property type="evidence" value="ECO:0007669"/>
    <property type="project" value="Ensembl"/>
</dbReference>
<dbReference type="GO" id="GO:0045656">
    <property type="term" value="P:negative regulation of monocyte differentiation"/>
    <property type="evidence" value="ECO:0000250"/>
    <property type="project" value="UniProtKB"/>
</dbReference>
<dbReference type="GO" id="GO:0032873">
    <property type="term" value="P:negative regulation of stress-activated MAPK cascade"/>
    <property type="evidence" value="ECO:0000315"/>
    <property type="project" value="UniProtKB"/>
</dbReference>
<dbReference type="GO" id="GO:0060633">
    <property type="term" value="P:negative regulation of transcription initiation by RNA polymerase II"/>
    <property type="evidence" value="ECO:0007669"/>
    <property type="project" value="Ensembl"/>
</dbReference>
<dbReference type="GO" id="GO:0008284">
    <property type="term" value="P:positive regulation of cell population proliferation"/>
    <property type="evidence" value="ECO:0000318"/>
    <property type="project" value="GO_Central"/>
</dbReference>
<dbReference type="GO" id="GO:0045893">
    <property type="term" value="P:positive regulation of DNA-templated transcription"/>
    <property type="evidence" value="ECO:0000250"/>
    <property type="project" value="UniProtKB"/>
</dbReference>
<dbReference type="GO" id="GO:0050679">
    <property type="term" value="P:positive regulation of epithelial cell proliferation"/>
    <property type="evidence" value="ECO:0000315"/>
    <property type="project" value="UniProtKB"/>
</dbReference>
<dbReference type="GO" id="GO:0048146">
    <property type="term" value="P:positive regulation of fibroblast proliferation"/>
    <property type="evidence" value="ECO:0000250"/>
    <property type="project" value="UniProtKB"/>
</dbReference>
<dbReference type="GO" id="GO:0010628">
    <property type="term" value="P:positive regulation of gene expression"/>
    <property type="evidence" value="ECO:0007669"/>
    <property type="project" value="Ensembl"/>
</dbReference>
<dbReference type="GO" id="GO:1902255">
    <property type="term" value="P:positive regulation of intrinsic apoptotic signaling pathway by p53 class mediator"/>
    <property type="evidence" value="ECO:0007669"/>
    <property type="project" value="Ensembl"/>
</dbReference>
<dbReference type="GO" id="GO:1902895">
    <property type="term" value="P:positive regulation of miRNA transcription"/>
    <property type="evidence" value="ECO:0007669"/>
    <property type="project" value="Ensembl"/>
</dbReference>
<dbReference type="GO" id="GO:0045944">
    <property type="term" value="P:positive regulation of transcription by RNA polymerase II"/>
    <property type="evidence" value="ECO:0000250"/>
    <property type="project" value="UniProtKB"/>
</dbReference>
<dbReference type="GO" id="GO:0032986">
    <property type="term" value="P:protein-DNA complex disassembly"/>
    <property type="evidence" value="ECO:0007669"/>
    <property type="project" value="Ensembl"/>
</dbReference>
<dbReference type="GO" id="GO:0010564">
    <property type="term" value="P:regulation of cell cycle process"/>
    <property type="evidence" value="ECO:0007669"/>
    <property type="project" value="Ensembl"/>
</dbReference>
<dbReference type="GO" id="GO:0006355">
    <property type="term" value="P:regulation of DNA-templated transcription"/>
    <property type="evidence" value="ECO:0000250"/>
    <property type="project" value="UniProtKB"/>
</dbReference>
<dbReference type="GO" id="GO:1904672">
    <property type="term" value="P:regulation of somatic stem cell population maintenance"/>
    <property type="evidence" value="ECO:0000250"/>
    <property type="project" value="UniProtKB"/>
</dbReference>
<dbReference type="GO" id="GO:0032204">
    <property type="term" value="P:regulation of telomere maintenance"/>
    <property type="evidence" value="ECO:0000250"/>
    <property type="project" value="UniProtKB"/>
</dbReference>
<dbReference type="GO" id="GO:0006357">
    <property type="term" value="P:regulation of transcription by RNA polymerase II"/>
    <property type="evidence" value="ECO:0000318"/>
    <property type="project" value="GO_Central"/>
</dbReference>
<dbReference type="GO" id="GO:0009410">
    <property type="term" value="P:response to xenobiotic stimulus"/>
    <property type="evidence" value="ECO:0000314"/>
    <property type="project" value="UniProtKB"/>
</dbReference>
<dbReference type="GO" id="GO:0016072">
    <property type="term" value="P:rRNA metabolic process"/>
    <property type="evidence" value="ECO:0000250"/>
    <property type="project" value="UniProtKB"/>
</dbReference>
<dbReference type="CDD" id="cd11458">
    <property type="entry name" value="bHLHzip_c-Myc"/>
    <property type="match status" value="1"/>
</dbReference>
<dbReference type="FunFam" id="4.10.280.10:FF:000019">
    <property type="entry name" value="Myc proto-oncogene protein"/>
    <property type="match status" value="1"/>
</dbReference>
<dbReference type="Gene3D" id="4.10.280.10">
    <property type="entry name" value="Helix-loop-helix DNA-binding domain"/>
    <property type="match status" value="1"/>
</dbReference>
<dbReference type="InterPro" id="IPR011598">
    <property type="entry name" value="bHLH_dom"/>
</dbReference>
<dbReference type="InterPro" id="IPR036638">
    <property type="entry name" value="HLH_DNA-bd_sf"/>
</dbReference>
<dbReference type="InterPro" id="IPR003327">
    <property type="entry name" value="Myc-LZ"/>
</dbReference>
<dbReference type="InterPro" id="IPR050433">
    <property type="entry name" value="Myc_transcription_factors"/>
</dbReference>
<dbReference type="InterPro" id="IPR002418">
    <property type="entry name" value="Tscrpt_reg_Myc"/>
</dbReference>
<dbReference type="InterPro" id="IPR012682">
    <property type="entry name" value="Tscrpt_reg_Myc_N"/>
</dbReference>
<dbReference type="PANTHER" id="PTHR45851">
    <property type="entry name" value="MYC PROTO-ONCOGENE"/>
    <property type="match status" value="1"/>
</dbReference>
<dbReference type="Pfam" id="PF00010">
    <property type="entry name" value="HLH"/>
    <property type="match status" value="1"/>
</dbReference>
<dbReference type="Pfam" id="PF02344">
    <property type="entry name" value="Myc-LZ"/>
    <property type="match status" value="1"/>
</dbReference>
<dbReference type="Pfam" id="PF01056">
    <property type="entry name" value="Myc_N"/>
    <property type="match status" value="1"/>
</dbReference>
<dbReference type="PIRSF" id="PIRSF001705">
    <property type="entry name" value="Myc_protein"/>
    <property type="match status" value="1"/>
</dbReference>
<dbReference type="PRINTS" id="PR00044">
    <property type="entry name" value="LEUZIPPRMYC"/>
</dbReference>
<dbReference type="SMART" id="SM00353">
    <property type="entry name" value="HLH"/>
    <property type="match status" value="1"/>
</dbReference>
<dbReference type="SUPFAM" id="SSF47459">
    <property type="entry name" value="HLH, helix-loop-helix DNA-binding domain"/>
    <property type="match status" value="1"/>
</dbReference>
<dbReference type="PROSITE" id="PS50888">
    <property type="entry name" value="BHLH"/>
    <property type="match status" value="1"/>
</dbReference>
<sequence>MDLLRRVETPAAAMPLNVSFANRNYDLDYDSVQPYFYCDEEENFYQQQQQSELQPPAPSEDIWKKFELLPTPPLSPSRRSGLCSPSYVAVASFSPRGDDDGGGGSFSTADQLEMVTELLGGDMVNQSFICDPDDETFIKNIIIQDCMWSGFSAAAKLVSEKLASYQAARKDSGSPSPARGPGGCSTSSLYLQDLSAAASECIDPSVVFPYPLNDSSSPKPCASPDSAAFSPSSDSLLSSAESSPRASPEPLALHEETPPTTSSDSEEEQEDEEEIDVVSVEKRQPPAKRSESGSPSAGGHSKPPHSPLVLKRCHVSTHQHNYAAPPSTRKDYPAAKRARLDSGRVLKQISNNRKCASPRSSDTEENDKRRTHNVLERQRRNELKRSFFALRDQIPELENNEKAPKVVILKKATAYILSVQAEEQKLLSEKDLLRKRREQLKHKLEQLRNSGA</sequence>